<protein>
    <recommendedName>
        <fullName evidence="2">Anhydromevalonate phosphate decarboxylase</fullName>
        <shortName evidence="2">AMPD</shortName>
        <ecNumber evidence="2">4.1.1.126</ecNumber>
    </recommendedName>
    <alternativeName>
        <fullName evidence="3">ORF-B(T)</fullName>
    </alternativeName>
</protein>
<evidence type="ECO:0000250" key="1">
    <source>
        <dbReference type="UniProtKB" id="P0AAB4"/>
    </source>
</evidence>
<evidence type="ECO:0000250" key="2">
    <source>
        <dbReference type="UniProtKB" id="Q9YA60"/>
    </source>
</evidence>
<evidence type="ECO:0000303" key="3">
    <source>
    </source>
</evidence>
<evidence type="ECO:0000305" key="4"/>
<dbReference type="EC" id="4.1.1.126" evidence="2"/>
<dbReference type="EMBL" id="AE000666">
    <property type="protein sequence ID" value="AAB85871.1"/>
    <property type="molecule type" value="Genomic_DNA"/>
</dbReference>
<dbReference type="EMBL" id="X03250">
    <property type="protein sequence ID" value="CAA27011.1"/>
    <property type="molecule type" value="Genomic_DNA"/>
</dbReference>
<dbReference type="PIR" id="E69052">
    <property type="entry name" value="E69052"/>
</dbReference>
<dbReference type="RefSeq" id="WP_010877006.1">
    <property type="nucleotide sequence ID" value="NC_000916.1"/>
</dbReference>
<dbReference type="SMR" id="P41655"/>
<dbReference type="FunCoup" id="P41655">
    <property type="interactions" value="11"/>
</dbReference>
<dbReference type="STRING" id="187420.MTH_1394"/>
<dbReference type="PaxDb" id="187420-MTH_1394"/>
<dbReference type="EnsemblBacteria" id="AAB85871">
    <property type="protein sequence ID" value="AAB85871"/>
    <property type="gene ID" value="MTH_1394"/>
</dbReference>
<dbReference type="KEGG" id="mth:MTH_1394"/>
<dbReference type="PATRIC" id="fig|187420.15.peg.1359"/>
<dbReference type="HOGENOM" id="CLU_023348_5_1_2"/>
<dbReference type="InParanoid" id="P41655"/>
<dbReference type="UniPathway" id="UPA00057"/>
<dbReference type="Proteomes" id="UP000005223">
    <property type="component" value="Chromosome"/>
</dbReference>
<dbReference type="GO" id="GO:0005737">
    <property type="term" value="C:cytoplasm"/>
    <property type="evidence" value="ECO:0007669"/>
    <property type="project" value="TreeGrafter"/>
</dbReference>
<dbReference type="GO" id="GO:0016831">
    <property type="term" value="F:carboxy-lyase activity"/>
    <property type="evidence" value="ECO:0007669"/>
    <property type="project" value="UniProtKB-KW"/>
</dbReference>
<dbReference type="GO" id="GO:0046872">
    <property type="term" value="F:metal ion binding"/>
    <property type="evidence" value="ECO:0007669"/>
    <property type="project" value="UniProtKB-KW"/>
</dbReference>
<dbReference type="GO" id="GO:0008299">
    <property type="term" value="P:isoprenoid biosynthetic process"/>
    <property type="evidence" value="ECO:0007669"/>
    <property type="project" value="UniProtKB-KW"/>
</dbReference>
<dbReference type="FunFam" id="3.40.1670.10:FF:000003">
    <property type="entry name" value="Phenolic acid decarboxylase"/>
    <property type="match status" value="1"/>
</dbReference>
<dbReference type="Gene3D" id="3.40.1670.10">
    <property type="entry name" value="UbiD C-terminal domain-like"/>
    <property type="match status" value="1"/>
</dbReference>
<dbReference type="InterPro" id="IPR002830">
    <property type="entry name" value="UbiD"/>
</dbReference>
<dbReference type="InterPro" id="IPR049381">
    <property type="entry name" value="UbiD-like_C"/>
</dbReference>
<dbReference type="InterPro" id="IPR049383">
    <property type="entry name" value="UbiD-like_N"/>
</dbReference>
<dbReference type="InterPro" id="IPR048304">
    <property type="entry name" value="UbiD_Rift_dom"/>
</dbReference>
<dbReference type="NCBIfam" id="TIGR00148">
    <property type="entry name" value="UbiD family decarboxylase"/>
    <property type="match status" value="1"/>
</dbReference>
<dbReference type="PANTHER" id="PTHR30108">
    <property type="entry name" value="3-OCTAPRENYL-4-HYDROXYBENZOATE CARBOXY-LYASE-RELATED"/>
    <property type="match status" value="1"/>
</dbReference>
<dbReference type="PANTHER" id="PTHR30108:SF21">
    <property type="entry name" value="4-HYDROXYBENZOATE DECARBOXYLASE"/>
    <property type="match status" value="1"/>
</dbReference>
<dbReference type="Pfam" id="PF01977">
    <property type="entry name" value="UbiD"/>
    <property type="match status" value="1"/>
</dbReference>
<dbReference type="Pfam" id="PF20696">
    <property type="entry name" value="UbiD_C"/>
    <property type="match status" value="1"/>
</dbReference>
<dbReference type="Pfam" id="PF20695">
    <property type="entry name" value="UbiD_N"/>
    <property type="match status" value="1"/>
</dbReference>
<dbReference type="SUPFAM" id="SSF50475">
    <property type="entry name" value="FMN-binding split barrel"/>
    <property type="match status" value="1"/>
</dbReference>
<dbReference type="SUPFAM" id="SSF143968">
    <property type="entry name" value="UbiD C-terminal domain-like"/>
    <property type="match status" value="1"/>
</dbReference>
<name>AMPD_METTH</name>
<feature type="chain" id="PRO_0000157385" description="Anhydromevalonate phosphate decarboxylase">
    <location>
        <begin position="1"/>
        <end position="423"/>
    </location>
</feature>
<feature type="active site" description="Proton acceptor" evidence="1">
    <location>
        <position position="245"/>
    </location>
</feature>
<feature type="binding site" evidence="1">
    <location>
        <position position="134"/>
    </location>
    <ligand>
        <name>Mn(2+)</name>
        <dbReference type="ChEBI" id="CHEBI:29035"/>
    </ligand>
</feature>
<feature type="binding site" evidence="1">
    <location>
        <position position="197"/>
    </location>
    <ligand>
        <name>Mn(2+)</name>
        <dbReference type="ChEBI" id="CHEBI:29035"/>
    </ligand>
</feature>
<proteinExistence type="inferred from homology"/>
<comment type="function">
    <text evidence="2">Catalyzes the conversion of trans-anhydromevalonate 5-phosphate (tAHMP) into isopentenyl phosphate (By similarity). Involved in the archaeal mevalonate (MVA) pathway, which provides fundamental precursors for isoprenoid biosynthesis, such as isopentenyl diphosphate (IPP) and dimethylallyl diphosphate (DMAPP) (By similarity).</text>
</comment>
<comment type="catalytic activity">
    <reaction evidence="2">
        <text>(2E)-3-methyl-5-phosphooxypent-2-enoate + H(+) = isopentenyl phosphate + CO2</text>
        <dbReference type="Rhea" id="RHEA:78971"/>
        <dbReference type="ChEBI" id="CHEBI:15378"/>
        <dbReference type="ChEBI" id="CHEBI:16526"/>
        <dbReference type="ChEBI" id="CHEBI:65078"/>
        <dbReference type="ChEBI" id="CHEBI:229665"/>
        <dbReference type="EC" id="4.1.1.126"/>
    </reaction>
    <physiologicalReaction direction="left-to-right" evidence="2">
        <dbReference type="Rhea" id="RHEA:78972"/>
    </physiologicalReaction>
</comment>
<comment type="cofactor">
    <cofactor evidence="1">
        <name>prenylated FMN</name>
        <dbReference type="ChEBI" id="CHEBI:87746"/>
    </cofactor>
</comment>
<comment type="cofactor">
    <cofactor evidence="1">
        <name>Mn(2+)</name>
        <dbReference type="ChEBI" id="CHEBI:29035"/>
    </cofactor>
</comment>
<comment type="pathway">
    <text evidence="2">Isoprenoid biosynthesis; isopentenyl diphosphate biosynthesis via mevalonate pathway.</text>
</comment>
<comment type="similarity">
    <text evidence="4">Belongs to the UbiD family.</text>
</comment>
<gene>
    <name type="ordered locus">MTH_1394</name>
</gene>
<accession>P41655</accession>
<sequence length="423" mass="46561">MRNFLDKIGEEALVVEDEVSTSFEAASILREHPRDLVILKNLKESDIPVISGLCNTREKIALSLNCRVHEITHRIVEAMENPTPISSVGGLDGYRSGRADLSELPILRHYRRDGGPYITAGVIFARDPDTGVRNASIHRMMVIGDDRLAVRIVPRHLYTYLQKAEERGEDLEIAIAIGMDPATLLATTTSIPIDADEMEVANTFHEGELELVRCEGVDMEVPPAEIILEGRILCGVREREGPFVDLTDTYDVVRDEPVISLERMHIRKDAMYHAILPAGFEHRLLQGLPQEPRIYRAVKNTVPTVRNVVLTEGGCCWLHAAVSIKKQTEGDGKNVIMAALAAHPSLKHVVVVDEDIDVLDPEEIEYAIATRVKGDDDILIVPGARGSSLDPAALPDGTTTKVGVDATAPLASAEKFQRVSRSE</sequence>
<organism>
    <name type="scientific">Methanothermobacter thermautotrophicus (strain ATCC 29096 / DSM 1053 / JCM 10044 / NBRC 100330 / Delta H)</name>
    <name type="common">Methanobacterium thermoautotrophicum</name>
    <dbReference type="NCBI Taxonomy" id="187420"/>
    <lineage>
        <taxon>Archaea</taxon>
        <taxon>Methanobacteriati</taxon>
        <taxon>Methanobacteriota</taxon>
        <taxon>Methanomada group</taxon>
        <taxon>Methanobacteria</taxon>
        <taxon>Methanobacteriales</taxon>
        <taxon>Methanobacteriaceae</taxon>
        <taxon>Methanothermobacter</taxon>
    </lineage>
</organism>
<reference key="1">
    <citation type="journal article" date="1997" name="J. Bacteriol.">
        <title>Complete genome sequence of Methanobacterium thermoautotrophicum deltaH: functional analysis and comparative genomics.</title>
        <authorList>
            <person name="Smith D.R."/>
            <person name="Doucette-Stamm L.A."/>
            <person name="Deloughery C."/>
            <person name="Lee H.-M."/>
            <person name="Dubois J."/>
            <person name="Aldredge T."/>
            <person name="Bashirzadeh R."/>
            <person name="Blakely D."/>
            <person name="Cook R."/>
            <person name="Gilbert K."/>
            <person name="Harrison D."/>
            <person name="Hoang L."/>
            <person name="Keagle P."/>
            <person name="Lumm W."/>
            <person name="Pothier B."/>
            <person name="Qiu D."/>
            <person name="Spadafora R."/>
            <person name="Vicare R."/>
            <person name="Wang Y."/>
            <person name="Wierzbowski J."/>
            <person name="Gibson R."/>
            <person name="Jiwani N."/>
            <person name="Caruso A."/>
            <person name="Bush D."/>
            <person name="Safer H."/>
            <person name="Patwell D."/>
            <person name="Prabhakar S."/>
            <person name="McDougall S."/>
            <person name="Shimer G."/>
            <person name="Goyal A."/>
            <person name="Pietrovski S."/>
            <person name="Church G.M."/>
            <person name="Daniels C.J."/>
            <person name="Mao J.-I."/>
            <person name="Rice P."/>
            <person name="Noelling J."/>
            <person name="Reeve J.N."/>
        </authorList>
    </citation>
    <scope>NUCLEOTIDE SEQUENCE [LARGE SCALE GENOMIC DNA]</scope>
    <source>
        <strain>ATCC 29096 / DSM 1053 / JCM 10044 / NBRC 100330 / Delta H</strain>
    </source>
</reference>
<reference key="2">
    <citation type="journal article" date="1985" name="J. Mol. Evol.">
        <title>Sequence divergence of an archaebacterial gene cloned from a mesophilic and a thermophilic methanogen.</title>
        <authorList>
            <person name="Hamilton P.T."/>
            <person name="Reeve J.N."/>
        </authorList>
    </citation>
    <scope>NUCLEOTIDE SEQUENCE [GENOMIC DNA] OF 1-66</scope>
    <source>
        <strain>ATCC 29096 / DSM 1053 / JCM 10044 / NBRC 100330 / Delta H</strain>
    </source>
</reference>
<keyword id="KW-0210">Decarboxylase</keyword>
<keyword id="KW-0285">Flavoprotein</keyword>
<keyword id="KW-0288">FMN</keyword>
<keyword id="KW-0414">Isoprene biosynthesis</keyword>
<keyword id="KW-0456">Lyase</keyword>
<keyword id="KW-0464">Manganese</keyword>
<keyword id="KW-0479">Metal-binding</keyword>
<keyword id="KW-1185">Reference proteome</keyword>